<keyword id="KW-0240">DNA-directed RNA polymerase</keyword>
<keyword id="KW-0548">Nucleotidyltransferase</keyword>
<keyword id="KW-0804">Transcription</keyword>
<keyword id="KW-0808">Transferase</keyword>
<reference key="1">
    <citation type="submission" date="2006-06" db="EMBL/GenBank/DDBJ databases">
        <title>Complete sequence of chromosome of Mycobacterium sp. MCS.</title>
        <authorList>
            <consortium name="US DOE Joint Genome Institute"/>
            <person name="Copeland A."/>
            <person name="Lucas S."/>
            <person name="Lapidus A."/>
            <person name="Barry K."/>
            <person name="Detter J.C."/>
            <person name="Glavina del Rio T."/>
            <person name="Hammon N."/>
            <person name="Israni S."/>
            <person name="Dalin E."/>
            <person name="Tice H."/>
            <person name="Pitluck S."/>
            <person name="Martinez M."/>
            <person name="Schmutz J."/>
            <person name="Larimer F."/>
            <person name="Land M."/>
            <person name="Hauser L."/>
            <person name="Kyrpides N."/>
            <person name="Kim E."/>
            <person name="Miller C.D."/>
            <person name="Hughes J.E."/>
            <person name="Anderson A.J."/>
            <person name="Sims R.C."/>
            <person name="Richardson P."/>
        </authorList>
    </citation>
    <scope>NUCLEOTIDE SEQUENCE [LARGE SCALE GENOMIC DNA]</scope>
    <source>
        <strain>MCS</strain>
    </source>
</reference>
<organism>
    <name type="scientific">Mycobacterium sp. (strain MCS)</name>
    <dbReference type="NCBI Taxonomy" id="164756"/>
    <lineage>
        <taxon>Bacteria</taxon>
        <taxon>Bacillati</taxon>
        <taxon>Actinomycetota</taxon>
        <taxon>Actinomycetes</taxon>
        <taxon>Mycobacteriales</taxon>
        <taxon>Mycobacteriaceae</taxon>
        <taxon>Mycobacterium</taxon>
    </lineage>
</organism>
<proteinExistence type="inferred from homology"/>
<comment type="function">
    <text evidence="1">DNA-dependent RNA polymerase catalyzes the transcription of DNA into RNA using the four ribonucleoside triphosphates as substrates.</text>
</comment>
<comment type="catalytic activity">
    <reaction evidence="1">
        <text>RNA(n) + a ribonucleoside 5'-triphosphate = RNA(n+1) + diphosphate</text>
        <dbReference type="Rhea" id="RHEA:21248"/>
        <dbReference type="Rhea" id="RHEA-COMP:14527"/>
        <dbReference type="Rhea" id="RHEA-COMP:17342"/>
        <dbReference type="ChEBI" id="CHEBI:33019"/>
        <dbReference type="ChEBI" id="CHEBI:61557"/>
        <dbReference type="ChEBI" id="CHEBI:140395"/>
        <dbReference type="EC" id="2.7.7.6"/>
    </reaction>
</comment>
<comment type="subunit">
    <text evidence="1">The RNAP catalytic core consists of 2 alpha, 1 beta, 1 beta' and 1 omega subunit. When a sigma factor is associated with the core the holoenzyme is formed, which can initiate transcription.</text>
</comment>
<comment type="similarity">
    <text evidence="1">Belongs to the RNA polymerase beta chain family.</text>
</comment>
<comment type="sequence caution" evidence="2">
    <conflict type="erroneous initiation">
        <sequence resource="EMBL-CDS" id="ABG07084"/>
    </conflict>
</comment>
<evidence type="ECO:0000255" key="1">
    <source>
        <dbReference type="HAMAP-Rule" id="MF_01321"/>
    </source>
</evidence>
<evidence type="ECO:0000305" key="2"/>
<protein>
    <recommendedName>
        <fullName evidence="1">DNA-directed RNA polymerase subunit beta</fullName>
        <shortName evidence="1">RNAP subunit beta</shortName>
        <ecNumber evidence="1">2.7.7.6</ecNumber>
    </recommendedName>
    <alternativeName>
        <fullName evidence="1">RNA polymerase subunit beta</fullName>
    </alternativeName>
    <alternativeName>
        <fullName evidence="1">Transcriptase subunit beta</fullName>
    </alternativeName>
</protein>
<feature type="chain" id="PRO_0000300352" description="DNA-directed RNA polymerase subunit beta">
    <location>
        <begin position="1"/>
        <end position="1172"/>
    </location>
</feature>
<dbReference type="EC" id="2.7.7.6" evidence="1"/>
<dbReference type="EMBL" id="CP000384">
    <property type="protein sequence ID" value="ABG07084.1"/>
    <property type="status" value="ALT_INIT"/>
    <property type="molecule type" value="Genomic_DNA"/>
</dbReference>
<dbReference type="SMR" id="Q1BDF0"/>
<dbReference type="KEGG" id="mmc:Mmcs_0969"/>
<dbReference type="HOGENOM" id="CLU_000524_4_0_11"/>
<dbReference type="BioCyc" id="MSP164756:G1G6O-993-MONOMER"/>
<dbReference type="GO" id="GO:0000428">
    <property type="term" value="C:DNA-directed RNA polymerase complex"/>
    <property type="evidence" value="ECO:0007669"/>
    <property type="project" value="UniProtKB-KW"/>
</dbReference>
<dbReference type="GO" id="GO:0003677">
    <property type="term" value="F:DNA binding"/>
    <property type="evidence" value="ECO:0007669"/>
    <property type="project" value="UniProtKB-UniRule"/>
</dbReference>
<dbReference type="GO" id="GO:0003899">
    <property type="term" value="F:DNA-directed RNA polymerase activity"/>
    <property type="evidence" value="ECO:0007669"/>
    <property type="project" value="UniProtKB-UniRule"/>
</dbReference>
<dbReference type="GO" id="GO:0032549">
    <property type="term" value="F:ribonucleoside binding"/>
    <property type="evidence" value="ECO:0007669"/>
    <property type="project" value="InterPro"/>
</dbReference>
<dbReference type="GO" id="GO:0006351">
    <property type="term" value="P:DNA-templated transcription"/>
    <property type="evidence" value="ECO:0007669"/>
    <property type="project" value="UniProtKB-UniRule"/>
</dbReference>
<dbReference type="CDD" id="cd00653">
    <property type="entry name" value="RNA_pol_B_RPB2"/>
    <property type="match status" value="1"/>
</dbReference>
<dbReference type="FunFam" id="2.40.50.150:FF:000001">
    <property type="entry name" value="DNA-directed RNA polymerase subunit beta"/>
    <property type="match status" value="1"/>
</dbReference>
<dbReference type="FunFam" id="3.90.1800.10:FF:000005">
    <property type="entry name" value="DNA-directed RNA polymerase subunit beta"/>
    <property type="match status" value="1"/>
</dbReference>
<dbReference type="Gene3D" id="2.40.50.100">
    <property type="match status" value="1"/>
</dbReference>
<dbReference type="Gene3D" id="2.40.50.150">
    <property type="match status" value="1"/>
</dbReference>
<dbReference type="Gene3D" id="3.90.1100.10">
    <property type="match status" value="1"/>
</dbReference>
<dbReference type="Gene3D" id="2.30.150.10">
    <property type="entry name" value="DNA-directed RNA polymerase, beta subunit, external 1 domain"/>
    <property type="match status" value="1"/>
</dbReference>
<dbReference type="Gene3D" id="2.40.270.10">
    <property type="entry name" value="DNA-directed RNA polymerase, subunit 2, domain 6"/>
    <property type="match status" value="1"/>
</dbReference>
<dbReference type="Gene3D" id="3.90.1800.10">
    <property type="entry name" value="RNA polymerase alpha subunit dimerisation domain"/>
    <property type="match status" value="1"/>
</dbReference>
<dbReference type="Gene3D" id="3.90.1110.10">
    <property type="entry name" value="RNA polymerase Rpb2, domain 2"/>
    <property type="match status" value="1"/>
</dbReference>
<dbReference type="HAMAP" id="MF_01321">
    <property type="entry name" value="RNApol_bact_RpoB"/>
    <property type="match status" value="1"/>
</dbReference>
<dbReference type="InterPro" id="IPR042107">
    <property type="entry name" value="DNA-dir_RNA_pol_bsu_ext_1_sf"/>
</dbReference>
<dbReference type="InterPro" id="IPR019462">
    <property type="entry name" value="DNA-dir_RNA_pol_bsu_external_1"/>
</dbReference>
<dbReference type="InterPro" id="IPR015712">
    <property type="entry name" value="DNA-dir_RNA_pol_su2"/>
</dbReference>
<dbReference type="InterPro" id="IPR007120">
    <property type="entry name" value="DNA-dir_RNAP_su2_dom"/>
</dbReference>
<dbReference type="InterPro" id="IPR037033">
    <property type="entry name" value="DNA-dir_RNAP_su2_hyb_sf"/>
</dbReference>
<dbReference type="InterPro" id="IPR010243">
    <property type="entry name" value="RNA_pol_bsu_bac"/>
</dbReference>
<dbReference type="InterPro" id="IPR007121">
    <property type="entry name" value="RNA_pol_bsu_CS"/>
</dbReference>
<dbReference type="InterPro" id="IPR007644">
    <property type="entry name" value="RNA_pol_bsu_protrusion"/>
</dbReference>
<dbReference type="InterPro" id="IPR007642">
    <property type="entry name" value="RNA_pol_Rpb2_2"/>
</dbReference>
<dbReference type="InterPro" id="IPR037034">
    <property type="entry name" value="RNA_pol_Rpb2_2_sf"/>
</dbReference>
<dbReference type="InterPro" id="IPR007645">
    <property type="entry name" value="RNA_pol_Rpb2_3"/>
</dbReference>
<dbReference type="InterPro" id="IPR007641">
    <property type="entry name" value="RNA_pol_Rpb2_7"/>
</dbReference>
<dbReference type="InterPro" id="IPR014724">
    <property type="entry name" value="RNA_pol_RPB2_OB-fold"/>
</dbReference>
<dbReference type="NCBIfam" id="NF001616">
    <property type="entry name" value="PRK00405.1"/>
    <property type="match status" value="1"/>
</dbReference>
<dbReference type="NCBIfam" id="TIGR02013">
    <property type="entry name" value="rpoB"/>
    <property type="match status" value="1"/>
</dbReference>
<dbReference type="PANTHER" id="PTHR20856">
    <property type="entry name" value="DNA-DIRECTED RNA POLYMERASE I SUBUNIT 2"/>
    <property type="match status" value="1"/>
</dbReference>
<dbReference type="Pfam" id="PF04563">
    <property type="entry name" value="RNA_pol_Rpb2_1"/>
    <property type="match status" value="1"/>
</dbReference>
<dbReference type="Pfam" id="PF04561">
    <property type="entry name" value="RNA_pol_Rpb2_2"/>
    <property type="match status" value="1"/>
</dbReference>
<dbReference type="Pfam" id="PF04565">
    <property type="entry name" value="RNA_pol_Rpb2_3"/>
    <property type="match status" value="1"/>
</dbReference>
<dbReference type="Pfam" id="PF10385">
    <property type="entry name" value="RNA_pol_Rpb2_45"/>
    <property type="match status" value="1"/>
</dbReference>
<dbReference type="Pfam" id="PF00562">
    <property type="entry name" value="RNA_pol_Rpb2_6"/>
    <property type="match status" value="1"/>
</dbReference>
<dbReference type="Pfam" id="PF04560">
    <property type="entry name" value="RNA_pol_Rpb2_7"/>
    <property type="match status" value="1"/>
</dbReference>
<dbReference type="SUPFAM" id="SSF64484">
    <property type="entry name" value="beta and beta-prime subunits of DNA dependent RNA-polymerase"/>
    <property type="match status" value="1"/>
</dbReference>
<dbReference type="PROSITE" id="PS01166">
    <property type="entry name" value="RNA_POL_BETA"/>
    <property type="match status" value="1"/>
</dbReference>
<sequence length="1172" mass="129093">MLEGCILAVSSQSKSAKAITNNSVPGAPNRISFAKLREPLEVPGLLDVQTESFDWLIGADSWRQRATARGDVNPTGGLEEVLTELSPIEDFSGSMSLSFSDPRFDEVKAPVDECKDKDMTYAAPLFVTAEFINNNTGEIKSQTVFMGDFPMMTEKGTFIINGTERVVVSQLVRSPGVYFDESIDKSTEKTLHSVKVIPGRGAWLEFDVDKRDTVGVRIDRKRRQPVTVLLKALGWTNEQITERFGFSEIMMSTLEKDNTAGTDEALLDIYRKLRPGEPPTKESAQTLLENLFFKEKRYDLARVGRYKVNKKLGLNTDKPITSSTLTEEDVVATIEYLVRLHQGDTVMTVPGGVEVPVEVDDIDHFGNRRLRTVGELIQNQIRVGLSRMERVVRERMTTQDVEAITPQTLINIRPVVAAIKEFFGTSQLSQFMDQNNPLSGLTHKRRLSALGPGGLSRERAGLEVRDVHSSHYGRMCPIETPEGPNIGLIGSLSVYARVNPFGFIETPYRKVENGVVTDQIDYLTADEEDRHVVAQANSPLDDEGHFTEDRVLVRRKGGEVEFVSATEVDYMDVSPRQMVSVATAMIPFLEHDDANRALMGANMQRQAVPLVRSEAPLVGTGMELRAAIDAGDVVVSEKAGVVEEVSADYITVMADDGTRHTYRMRKFARSNHGTCANQRPIVDAGQRVEAGQVVADGPCTQNGEMALGKNLLVAIMPWEGHNYEDAIILSNRLVEEDVLTSIHIEEHEIDARDTKLGAEEITRDIPNVSDEVLADLDERGIVRIGAEVRDGDILVGKVTPKGETELTPEERLLRAIFGEKAREVRDTSLKVPHGESGKVIGIRVFSREDDDELPAGVNELVRVYVAQKRKISDGDKLAGRHGNKGVIGKILPVEDMPFLPDGTPVDIILNTHGVPRRMNIGQILETHLGWVAKAGWNINVAGADGVPDWAEKLPEELYSAPSDSIVATPVFDGARENELSGLLASTLPNRDGDVMVNEDGKAELFDGRSGEPFPYPVTVGYMYILKLHHLVDDKIHARSTGPYSMITQQPLGGKAQFGGQRFGEMECWAMQAYGAAYTLQELLTIKSDDTVGRVKVYEAIVKGENIPEPGIPESFKVLLKELQSLCLNVEVLSSDGAAIEMRDGDDEDLERAAANLGINLSRNESASVEDLA</sequence>
<accession>Q1BDF0</accession>
<name>RPOB_MYCSS</name>
<gene>
    <name evidence="1" type="primary">rpoB</name>
    <name type="ordered locus">Mmcs_0969</name>
</gene>